<protein>
    <recommendedName>
        <fullName evidence="1">3-hydroxyacyl-[acyl-carrier-protein] dehydratase FabZ</fullName>
        <ecNumber evidence="1">4.2.1.59</ecNumber>
    </recommendedName>
    <alternativeName>
        <fullName evidence="1">(3R)-hydroxymyristoyl-[acyl-carrier-protein] dehydratase</fullName>
        <shortName evidence="1">(3R)-hydroxymyristoyl-ACP dehydrase</shortName>
    </alternativeName>
    <alternativeName>
        <fullName evidence="1">Beta-hydroxyacyl-ACP dehydratase</fullName>
    </alternativeName>
</protein>
<keyword id="KW-0963">Cytoplasm</keyword>
<keyword id="KW-0441">Lipid A biosynthesis</keyword>
<keyword id="KW-0444">Lipid biosynthesis</keyword>
<keyword id="KW-0443">Lipid metabolism</keyword>
<keyword id="KW-0456">Lyase</keyword>
<accession>A0RL73</accession>
<reference key="1">
    <citation type="journal article" date="2007" name="J. Bacteriol.">
        <title>The complete genome sequence of Bacillus thuringiensis Al Hakam.</title>
        <authorList>
            <person name="Challacombe J.F."/>
            <person name="Altherr M.R."/>
            <person name="Xie G."/>
            <person name="Bhotika S.S."/>
            <person name="Brown N."/>
            <person name="Bruce D."/>
            <person name="Campbell C.S."/>
            <person name="Campbell M.L."/>
            <person name="Chen J."/>
            <person name="Chertkov O."/>
            <person name="Cleland C."/>
            <person name="Dimitrijevic M."/>
            <person name="Doggett N.A."/>
            <person name="Fawcett J.J."/>
            <person name="Glavina T."/>
            <person name="Goodwin L.A."/>
            <person name="Green L.D."/>
            <person name="Han C.S."/>
            <person name="Hill K.K."/>
            <person name="Hitchcock P."/>
            <person name="Jackson P.J."/>
            <person name="Keim P."/>
            <person name="Kewalramani A.R."/>
            <person name="Longmire J."/>
            <person name="Lucas S."/>
            <person name="Malfatti S."/>
            <person name="Martinez D."/>
            <person name="McMurry K."/>
            <person name="Meincke L.J."/>
            <person name="Misra M."/>
            <person name="Moseman B.L."/>
            <person name="Mundt M."/>
            <person name="Munk A.C."/>
            <person name="Okinaka R.T."/>
            <person name="Parson-Quintana B."/>
            <person name="Reilly L.P."/>
            <person name="Richardson P."/>
            <person name="Robinson D.L."/>
            <person name="Saunders E."/>
            <person name="Tapia R."/>
            <person name="Tesmer J.G."/>
            <person name="Thayer N."/>
            <person name="Thompson L.S."/>
            <person name="Tice H."/>
            <person name="Ticknor L.O."/>
            <person name="Wills P.L."/>
            <person name="Gilna P."/>
            <person name="Brettin T.S."/>
        </authorList>
    </citation>
    <scope>NUCLEOTIDE SEQUENCE [LARGE SCALE GENOMIC DNA]</scope>
    <source>
        <strain>Al Hakam</strain>
    </source>
</reference>
<feature type="chain" id="PRO_0000301879" description="3-hydroxyacyl-[acyl-carrier-protein] dehydratase FabZ">
    <location>
        <begin position="1"/>
        <end position="144"/>
    </location>
</feature>
<feature type="active site" evidence="1">
    <location>
        <position position="48"/>
    </location>
</feature>
<dbReference type="EC" id="4.2.1.59" evidence="1"/>
<dbReference type="EMBL" id="CP000485">
    <property type="protein sequence ID" value="ABK87966.1"/>
    <property type="molecule type" value="Genomic_DNA"/>
</dbReference>
<dbReference type="RefSeq" id="WP_000931959.1">
    <property type="nucleotide sequence ID" value="NC_008600.1"/>
</dbReference>
<dbReference type="SMR" id="A0RL73"/>
<dbReference type="GeneID" id="75088464"/>
<dbReference type="KEGG" id="btl:BALH_4784"/>
<dbReference type="HOGENOM" id="CLU_078912_3_0_9"/>
<dbReference type="GO" id="GO:0005737">
    <property type="term" value="C:cytoplasm"/>
    <property type="evidence" value="ECO:0007669"/>
    <property type="project" value="UniProtKB-SubCell"/>
</dbReference>
<dbReference type="GO" id="GO:0016020">
    <property type="term" value="C:membrane"/>
    <property type="evidence" value="ECO:0007669"/>
    <property type="project" value="GOC"/>
</dbReference>
<dbReference type="GO" id="GO:0019171">
    <property type="term" value="F:(3R)-hydroxyacyl-[acyl-carrier-protein] dehydratase activity"/>
    <property type="evidence" value="ECO:0007669"/>
    <property type="project" value="UniProtKB-EC"/>
</dbReference>
<dbReference type="GO" id="GO:0006633">
    <property type="term" value="P:fatty acid biosynthetic process"/>
    <property type="evidence" value="ECO:0007669"/>
    <property type="project" value="UniProtKB-UniRule"/>
</dbReference>
<dbReference type="GO" id="GO:0009245">
    <property type="term" value="P:lipid A biosynthetic process"/>
    <property type="evidence" value="ECO:0007669"/>
    <property type="project" value="UniProtKB-UniRule"/>
</dbReference>
<dbReference type="CDD" id="cd01288">
    <property type="entry name" value="FabZ"/>
    <property type="match status" value="1"/>
</dbReference>
<dbReference type="FunFam" id="3.10.129.10:FF:000001">
    <property type="entry name" value="3-hydroxyacyl-[acyl-carrier-protein] dehydratase FabZ"/>
    <property type="match status" value="1"/>
</dbReference>
<dbReference type="Gene3D" id="3.10.129.10">
    <property type="entry name" value="Hotdog Thioesterase"/>
    <property type="match status" value="1"/>
</dbReference>
<dbReference type="HAMAP" id="MF_00406">
    <property type="entry name" value="FabZ"/>
    <property type="match status" value="1"/>
</dbReference>
<dbReference type="InterPro" id="IPR013114">
    <property type="entry name" value="FabA_FabZ"/>
</dbReference>
<dbReference type="InterPro" id="IPR010084">
    <property type="entry name" value="FabZ"/>
</dbReference>
<dbReference type="InterPro" id="IPR029069">
    <property type="entry name" value="HotDog_dom_sf"/>
</dbReference>
<dbReference type="NCBIfam" id="TIGR01750">
    <property type="entry name" value="fabZ"/>
    <property type="match status" value="1"/>
</dbReference>
<dbReference type="NCBIfam" id="NF000582">
    <property type="entry name" value="PRK00006.1"/>
    <property type="match status" value="1"/>
</dbReference>
<dbReference type="PANTHER" id="PTHR30272">
    <property type="entry name" value="3-HYDROXYACYL-[ACYL-CARRIER-PROTEIN] DEHYDRATASE"/>
    <property type="match status" value="1"/>
</dbReference>
<dbReference type="PANTHER" id="PTHR30272:SF1">
    <property type="entry name" value="3-HYDROXYACYL-[ACYL-CARRIER-PROTEIN] DEHYDRATASE"/>
    <property type="match status" value="1"/>
</dbReference>
<dbReference type="Pfam" id="PF07977">
    <property type="entry name" value="FabA"/>
    <property type="match status" value="1"/>
</dbReference>
<dbReference type="SUPFAM" id="SSF54637">
    <property type="entry name" value="Thioesterase/thiol ester dehydrase-isomerase"/>
    <property type="match status" value="1"/>
</dbReference>
<organism>
    <name type="scientific">Bacillus thuringiensis (strain Al Hakam)</name>
    <dbReference type="NCBI Taxonomy" id="412694"/>
    <lineage>
        <taxon>Bacteria</taxon>
        <taxon>Bacillati</taxon>
        <taxon>Bacillota</taxon>
        <taxon>Bacilli</taxon>
        <taxon>Bacillales</taxon>
        <taxon>Bacillaceae</taxon>
        <taxon>Bacillus</taxon>
        <taxon>Bacillus cereus group</taxon>
    </lineage>
</organism>
<proteinExistence type="inferred from homology"/>
<sequence>MLNIEQIKEIIPHRYPFLLVDKILEVDEGKRAVGIKNVSANEEFFNGHFPDYAVMPGVLIVEALAQVGAVAVLKKEENRGRLAFFAGIDNCRFKKQVRPGDQLRLEVEMTRVRGPIGKGKAIATVDGEVACEAEITFAIGDKKE</sequence>
<evidence type="ECO:0000255" key="1">
    <source>
        <dbReference type="HAMAP-Rule" id="MF_00406"/>
    </source>
</evidence>
<gene>
    <name evidence="1" type="primary">fabZ</name>
    <name type="ordered locus">BALH_4784</name>
</gene>
<name>FABZ_BACAH</name>
<comment type="function">
    <text evidence="1">Involved in unsaturated fatty acids biosynthesis. Catalyzes the dehydration of short chain beta-hydroxyacyl-ACPs and long chain saturated and unsaturated beta-hydroxyacyl-ACPs.</text>
</comment>
<comment type="catalytic activity">
    <reaction evidence="1">
        <text>a (3R)-hydroxyacyl-[ACP] = a (2E)-enoyl-[ACP] + H2O</text>
        <dbReference type="Rhea" id="RHEA:13097"/>
        <dbReference type="Rhea" id="RHEA-COMP:9925"/>
        <dbReference type="Rhea" id="RHEA-COMP:9945"/>
        <dbReference type="ChEBI" id="CHEBI:15377"/>
        <dbReference type="ChEBI" id="CHEBI:78784"/>
        <dbReference type="ChEBI" id="CHEBI:78827"/>
        <dbReference type="EC" id="4.2.1.59"/>
    </reaction>
</comment>
<comment type="subcellular location">
    <subcellularLocation>
        <location evidence="1">Cytoplasm</location>
    </subcellularLocation>
</comment>
<comment type="similarity">
    <text evidence="1">Belongs to the thioester dehydratase family. FabZ subfamily.</text>
</comment>